<protein>
    <recommendedName>
        <fullName>Uncharacterized protein ORF4</fullName>
    </recommendedName>
</protein>
<dbReference type="EMBL" id="AJ309022">
    <property type="protein sequence ID" value="CAC84403.1"/>
    <property type="molecule type" value="Genomic_RNA"/>
</dbReference>
<dbReference type="RefSeq" id="NP_542615.1">
    <property type="nucleotide sequence ID" value="NC_003347.1"/>
</dbReference>
<dbReference type="KEGG" id="vg:1732620"/>
<dbReference type="Proteomes" id="UP000000399">
    <property type="component" value="Segment"/>
</dbReference>
<accession>Q8UZB3</accession>
<proteinExistence type="predicted"/>
<reference key="1">
    <citation type="journal article" date="2001" name="J. Gen. Virol.">
        <title>Complete nucleotide sequence and genome organization of Grapevine fleck virus.</title>
        <authorList>
            <person name="Sabanadzovic S."/>
            <person name="Ghanem-Sabanadzovic N.A."/>
            <person name="Saldarelli P."/>
            <person name="Martelli G.P."/>
        </authorList>
    </citation>
    <scope>NUCLEOTIDE SEQUENCE [GENOMIC RNA]</scope>
</reference>
<keyword id="KW-1185">Reference proteome</keyword>
<name>ORF4_GFKVM</name>
<gene>
    <name type="ORF">ORF4</name>
</gene>
<feature type="chain" id="PRO_0000402503" description="Uncharacterized protein ORF4">
    <location>
        <begin position="1"/>
        <end position="157"/>
    </location>
</feature>
<feature type="region of interest" description="Disordered" evidence="1">
    <location>
        <begin position="1"/>
        <end position="157"/>
    </location>
</feature>
<feature type="compositionally biased region" description="Pro residues" evidence="1">
    <location>
        <begin position="8"/>
        <end position="31"/>
    </location>
</feature>
<feature type="compositionally biased region" description="Basic residues" evidence="1">
    <location>
        <begin position="62"/>
        <end position="71"/>
    </location>
</feature>
<feature type="compositionally biased region" description="Pro residues" evidence="1">
    <location>
        <begin position="76"/>
        <end position="95"/>
    </location>
</feature>
<feature type="compositionally biased region" description="Low complexity" evidence="1">
    <location>
        <begin position="96"/>
        <end position="117"/>
    </location>
</feature>
<feature type="compositionally biased region" description="Low complexity" evidence="1">
    <location>
        <begin position="124"/>
        <end position="157"/>
    </location>
</feature>
<evidence type="ECO:0000256" key="1">
    <source>
        <dbReference type="SAM" id="MobiDB-lite"/>
    </source>
</evidence>
<sequence length="157" mass="15912">MNRGPPLRSRPPSSPPPASAFPGPSPFPSPSPANSLPSASPPPPTCTPSSPVSRPFASARLRTSHPPRCPHRSAPPSAPSPPFTPPHPLPTPTPSSSPRSPWLSLAPLPTSSASLASFPPPPSSFSSPSSPSTSPLSPSSSSFPSSSSFSFLVPSNS</sequence>
<organismHost>
    <name type="scientific">Vitis vinifera</name>
    <name type="common">Grape</name>
    <dbReference type="NCBI Taxonomy" id="29760"/>
</organismHost>
<organism>
    <name type="scientific">Grapevine fleck virus (isolate Italy/MT48)</name>
    <name type="common">GFkV</name>
    <dbReference type="NCBI Taxonomy" id="652668"/>
    <lineage>
        <taxon>Viruses</taxon>
        <taxon>Riboviria</taxon>
        <taxon>Orthornavirae</taxon>
        <taxon>Kitrinoviricota</taxon>
        <taxon>Alsuviricetes</taxon>
        <taxon>Tymovirales</taxon>
        <taxon>Tymoviridae</taxon>
        <taxon>Maculavirus</taxon>
        <taxon>Maculavirus vitis</taxon>
    </lineage>
</organism>